<comment type="function">
    <text evidence="1">Catalyzes the ferrous insertion into protoporphyrin IX.</text>
</comment>
<comment type="catalytic activity">
    <reaction evidence="1">
        <text>heme b + 2 H(+) = protoporphyrin IX + Fe(2+)</text>
        <dbReference type="Rhea" id="RHEA:22584"/>
        <dbReference type="ChEBI" id="CHEBI:15378"/>
        <dbReference type="ChEBI" id="CHEBI:29033"/>
        <dbReference type="ChEBI" id="CHEBI:57306"/>
        <dbReference type="ChEBI" id="CHEBI:60344"/>
        <dbReference type="EC" id="4.98.1.1"/>
    </reaction>
</comment>
<comment type="pathway">
    <text evidence="1">Porphyrin-containing compound metabolism; protoheme biosynthesis; protoheme from protoporphyrin-IX: step 1/1.</text>
</comment>
<comment type="subcellular location">
    <subcellularLocation>
        <location evidence="1">Cytoplasm</location>
    </subcellularLocation>
</comment>
<comment type="similarity">
    <text evidence="1">Belongs to the ferrochelatase family.</text>
</comment>
<dbReference type="EC" id="4.98.1.1" evidence="1"/>
<dbReference type="EMBL" id="CP000158">
    <property type="protein sequence ID" value="ABI77129.1"/>
    <property type="molecule type" value="Genomic_DNA"/>
</dbReference>
<dbReference type="RefSeq" id="WP_011648532.1">
    <property type="nucleotide sequence ID" value="NC_008358.1"/>
</dbReference>
<dbReference type="SMR" id="Q0BWA5"/>
<dbReference type="STRING" id="228405.HNE_3567"/>
<dbReference type="KEGG" id="hne:HNE_3567"/>
<dbReference type="eggNOG" id="COG0276">
    <property type="taxonomic scope" value="Bacteria"/>
</dbReference>
<dbReference type="HOGENOM" id="CLU_018884_4_1_5"/>
<dbReference type="UniPathway" id="UPA00252">
    <property type="reaction ID" value="UER00325"/>
</dbReference>
<dbReference type="Proteomes" id="UP000001959">
    <property type="component" value="Chromosome"/>
</dbReference>
<dbReference type="GO" id="GO:0005737">
    <property type="term" value="C:cytoplasm"/>
    <property type="evidence" value="ECO:0007669"/>
    <property type="project" value="UniProtKB-SubCell"/>
</dbReference>
<dbReference type="GO" id="GO:0004325">
    <property type="term" value="F:ferrochelatase activity"/>
    <property type="evidence" value="ECO:0007669"/>
    <property type="project" value="UniProtKB-UniRule"/>
</dbReference>
<dbReference type="GO" id="GO:0046872">
    <property type="term" value="F:metal ion binding"/>
    <property type="evidence" value="ECO:0007669"/>
    <property type="project" value="UniProtKB-KW"/>
</dbReference>
<dbReference type="GO" id="GO:0006783">
    <property type="term" value="P:heme biosynthetic process"/>
    <property type="evidence" value="ECO:0007669"/>
    <property type="project" value="UniProtKB-UniRule"/>
</dbReference>
<dbReference type="CDD" id="cd00419">
    <property type="entry name" value="Ferrochelatase_C"/>
    <property type="match status" value="1"/>
</dbReference>
<dbReference type="CDD" id="cd03411">
    <property type="entry name" value="Ferrochelatase_N"/>
    <property type="match status" value="1"/>
</dbReference>
<dbReference type="Gene3D" id="3.40.50.1400">
    <property type="match status" value="2"/>
</dbReference>
<dbReference type="HAMAP" id="MF_00323">
    <property type="entry name" value="Ferrochelatase"/>
    <property type="match status" value="1"/>
</dbReference>
<dbReference type="InterPro" id="IPR001015">
    <property type="entry name" value="Ferrochelatase"/>
</dbReference>
<dbReference type="InterPro" id="IPR019772">
    <property type="entry name" value="Ferrochelatase_AS"/>
</dbReference>
<dbReference type="InterPro" id="IPR033644">
    <property type="entry name" value="Ferrochelatase_C"/>
</dbReference>
<dbReference type="InterPro" id="IPR033659">
    <property type="entry name" value="Ferrochelatase_N"/>
</dbReference>
<dbReference type="NCBIfam" id="TIGR00109">
    <property type="entry name" value="hemH"/>
    <property type="match status" value="1"/>
</dbReference>
<dbReference type="PANTHER" id="PTHR11108">
    <property type="entry name" value="FERROCHELATASE"/>
    <property type="match status" value="1"/>
</dbReference>
<dbReference type="PANTHER" id="PTHR11108:SF1">
    <property type="entry name" value="FERROCHELATASE, MITOCHONDRIAL"/>
    <property type="match status" value="1"/>
</dbReference>
<dbReference type="Pfam" id="PF00762">
    <property type="entry name" value="Ferrochelatase"/>
    <property type="match status" value="1"/>
</dbReference>
<dbReference type="SUPFAM" id="SSF53800">
    <property type="entry name" value="Chelatase"/>
    <property type="match status" value="1"/>
</dbReference>
<dbReference type="PROSITE" id="PS00534">
    <property type="entry name" value="FERROCHELATASE"/>
    <property type="match status" value="1"/>
</dbReference>
<feature type="chain" id="PRO_1000116053" description="Ferrochelatase">
    <location>
        <begin position="1"/>
        <end position="357"/>
    </location>
</feature>
<feature type="binding site" evidence="1">
    <location>
        <position position="193"/>
    </location>
    <ligand>
        <name>Fe cation</name>
        <dbReference type="ChEBI" id="CHEBI:24875"/>
    </ligand>
</feature>
<feature type="binding site" evidence="1">
    <location>
        <position position="272"/>
    </location>
    <ligand>
        <name>Fe cation</name>
        <dbReference type="ChEBI" id="CHEBI:24875"/>
    </ligand>
</feature>
<name>HEMH_HYPNA</name>
<keyword id="KW-0963">Cytoplasm</keyword>
<keyword id="KW-0350">Heme biosynthesis</keyword>
<keyword id="KW-0408">Iron</keyword>
<keyword id="KW-0456">Lyase</keyword>
<keyword id="KW-0479">Metal-binding</keyword>
<keyword id="KW-0627">Porphyrin biosynthesis</keyword>
<keyword id="KW-1185">Reference proteome</keyword>
<sequence>MGRRIAVVLFNLGGPDTGNDVQPFLKNLFRDPAIIRAPLPVRWLVARLISTLRAPVVKQNYAMMDAGGGSPLLRETKKQADALQAELAKKLPGDEVRCFIAMRYWHPFTEEAAAEVQKWGADEVVLLPLYPQFSTTTTGSSLSAWHKAYKGKSRTICCYPFEENFVSAHVDQIMAAWERAGRPGNVNLLLSAHGLPESVVKSGDPYQWQCEALAEMIAGRVPADWEVSVCYQSRVGPMKWIGPPTEEEIARISDQGRNILIAPIAFVSEHIETLVELGEEYRLVAEKHGAASYTRVEALGVHPGFISTLTGEVLAALGMKETIRSCAGGRLCPSGWSGCPQAELKQKAGVRITETAG</sequence>
<protein>
    <recommendedName>
        <fullName evidence="1">Ferrochelatase</fullName>
        <ecNumber evidence="1">4.98.1.1</ecNumber>
    </recommendedName>
    <alternativeName>
        <fullName evidence="1">Heme synthase</fullName>
    </alternativeName>
    <alternativeName>
        <fullName evidence="1">Protoheme ferro-lyase</fullName>
    </alternativeName>
</protein>
<organism>
    <name type="scientific">Hyphomonas neptunium (strain ATCC 15444)</name>
    <dbReference type="NCBI Taxonomy" id="228405"/>
    <lineage>
        <taxon>Bacteria</taxon>
        <taxon>Pseudomonadati</taxon>
        <taxon>Pseudomonadota</taxon>
        <taxon>Alphaproteobacteria</taxon>
        <taxon>Hyphomonadales</taxon>
        <taxon>Hyphomonadaceae</taxon>
        <taxon>Hyphomonas</taxon>
    </lineage>
</organism>
<evidence type="ECO:0000255" key="1">
    <source>
        <dbReference type="HAMAP-Rule" id="MF_00323"/>
    </source>
</evidence>
<proteinExistence type="inferred from homology"/>
<accession>Q0BWA5</accession>
<reference key="1">
    <citation type="journal article" date="2006" name="J. Bacteriol.">
        <title>Comparative genomic evidence for a close relationship between the dimorphic prosthecate bacteria Hyphomonas neptunium and Caulobacter crescentus.</title>
        <authorList>
            <person name="Badger J.H."/>
            <person name="Hoover T.R."/>
            <person name="Brun Y.V."/>
            <person name="Weiner R.M."/>
            <person name="Laub M.T."/>
            <person name="Alexandre G."/>
            <person name="Mrazek J."/>
            <person name="Ren Q."/>
            <person name="Paulsen I.T."/>
            <person name="Nelson K.E."/>
            <person name="Khouri H.M."/>
            <person name="Radune D."/>
            <person name="Sosa J."/>
            <person name="Dodson R.J."/>
            <person name="Sullivan S.A."/>
            <person name="Rosovitz M.J."/>
            <person name="Madupu R."/>
            <person name="Brinkac L.M."/>
            <person name="Durkin A.S."/>
            <person name="Daugherty S.C."/>
            <person name="Kothari S.P."/>
            <person name="Giglio M.G."/>
            <person name="Zhou L."/>
            <person name="Haft D.H."/>
            <person name="Selengut J.D."/>
            <person name="Davidsen T.M."/>
            <person name="Yang Q."/>
            <person name="Zafar N."/>
            <person name="Ward N.L."/>
        </authorList>
    </citation>
    <scope>NUCLEOTIDE SEQUENCE [LARGE SCALE GENOMIC DNA]</scope>
    <source>
        <strain>ATCC 15444</strain>
    </source>
</reference>
<gene>
    <name evidence="1" type="primary">hemH</name>
    <name type="ordered locus">HNE_3567</name>
</gene>